<reference key="1">
    <citation type="journal article" date="1996" name="DNA Res.">
        <title>Sequence analysis of the genome of the unicellular cyanobacterium Synechocystis sp. strain PCC6803. II. Sequence determination of the entire genome and assignment of potential protein-coding regions.</title>
        <authorList>
            <person name="Kaneko T."/>
            <person name="Sato S."/>
            <person name="Kotani H."/>
            <person name="Tanaka A."/>
            <person name="Asamizu E."/>
            <person name="Nakamura Y."/>
            <person name="Miyajima N."/>
            <person name="Hirosawa M."/>
            <person name="Sugiura M."/>
            <person name="Sasamoto S."/>
            <person name="Kimura T."/>
            <person name="Hosouchi T."/>
            <person name="Matsuno A."/>
            <person name="Muraki A."/>
            <person name="Nakazaki N."/>
            <person name="Naruo K."/>
            <person name="Okumura S."/>
            <person name="Shimpo S."/>
            <person name="Takeuchi C."/>
            <person name="Wada T."/>
            <person name="Watanabe A."/>
            <person name="Yamada M."/>
            <person name="Yasuda M."/>
            <person name="Tabata S."/>
        </authorList>
    </citation>
    <scope>NUCLEOTIDE SEQUENCE [LARGE SCALE GENOMIC DNA]</scope>
    <source>
        <strain>ATCC 27184 / PCC 6803 / Kazusa</strain>
    </source>
</reference>
<reference key="2">
    <citation type="journal article" date="1997" name="Electrophoresis">
        <title>Towards a proteome project of cyanobacterium Synechocystis sp. strain PCC6803: linking 130 protein spots with their respective genes.</title>
        <authorList>
            <person name="Sazuka T."/>
            <person name="Ohara O."/>
        </authorList>
    </citation>
    <scope>PROTEIN SEQUENCE OF 2-21</scope>
</reference>
<organism>
    <name type="scientific">Synechocystis sp. (strain ATCC 27184 / PCC 6803 / Kazusa)</name>
    <dbReference type="NCBI Taxonomy" id="1111708"/>
    <lineage>
        <taxon>Bacteria</taxon>
        <taxon>Bacillati</taxon>
        <taxon>Cyanobacteriota</taxon>
        <taxon>Cyanophyceae</taxon>
        <taxon>Synechococcales</taxon>
        <taxon>Merismopediaceae</taxon>
        <taxon>Synechocystis</taxon>
    </lineage>
</organism>
<dbReference type="EC" id="1.15.1.1"/>
<dbReference type="EMBL" id="BA000022">
    <property type="protein sequence ID" value="BAA18027.1"/>
    <property type="molecule type" value="Genomic_DNA"/>
</dbReference>
<dbReference type="PIR" id="S75466">
    <property type="entry name" value="S75466"/>
</dbReference>
<dbReference type="SMR" id="P77968"/>
<dbReference type="FunCoup" id="P77968">
    <property type="interactions" value="276"/>
</dbReference>
<dbReference type="STRING" id="1148.gene:10498897"/>
<dbReference type="PaxDb" id="1148-1653111"/>
<dbReference type="EnsemblBacteria" id="BAA18027">
    <property type="protein sequence ID" value="BAA18027"/>
    <property type="gene ID" value="BAA18027"/>
</dbReference>
<dbReference type="KEGG" id="syn:slr1516"/>
<dbReference type="eggNOG" id="COG0605">
    <property type="taxonomic scope" value="Bacteria"/>
</dbReference>
<dbReference type="InParanoid" id="P77968"/>
<dbReference type="PhylomeDB" id="P77968"/>
<dbReference type="Proteomes" id="UP000001425">
    <property type="component" value="Chromosome"/>
</dbReference>
<dbReference type="GO" id="GO:0046872">
    <property type="term" value="F:metal ion binding"/>
    <property type="evidence" value="ECO:0007669"/>
    <property type="project" value="UniProtKB-KW"/>
</dbReference>
<dbReference type="GO" id="GO:0004784">
    <property type="term" value="F:superoxide dismutase activity"/>
    <property type="evidence" value="ECO:0007669"/>
    <property type="project" value="UniProtKB-EC"/>
</dbReference>
<dbReference type="FunFam" id="1.10.287.990:FF:000002">
    <property type="entry name" value="Superoxide dismutase"/>
    <property type="match status" value="1"/>
</dbReference>
<dbReference type="FunFam" id="3.55.40.20:FF:000001">
    <property type="entry name" value="Superoxide dismutase"/>
    <property type="match status" value="1"/>
</dbReference>
<dbReference type="Gene3D" id="1.10.287.990">
    <property type="entry name" value="Fe,Mn superoxide dismutase (SOD) domain"/>
    <property type="match status" value="1"/>
</dbReference>
<dbReference type="Gene3D" id="3.55.40.20">
    <property type="entry name" value="Iron/manganese superoxide dismutase, C-terminal domain"/>
    <property type="match status" value="1"/>
</dbReference>
<dbReference type="InterPro" id="IPR001189">
    <property type="entry name" value="Mn/Fe_SOD"/>
</dbReference>
<dbReference type="InterPro" id="IPR019833">
    <property type="entry name" value="Mn/Fe_SOD_BS"/>
</dbReference>
<dbReference type="InterPro" id="IPR019832">
    <property type="entry name" value="Mn/Fe_SOD_C"/>
</dbReference>
<dbReference type="InterPro" id="IPR019831">
    <property type="entry name" value="Mn/Fe_SOD_N"/>
</dbReference>
<dbReference type="InterPro" id="IPR036324">
    <property type="entry name" value="Mn/Fe_SOD_N_sf"/>
</dbReference>
<dbReference type="InterPro" id="IPR036314">
    <property type="entry name" value="SOD_C_sf"/>
</dbReference>
<dbReference type="PANTHER" id="PTHR42769">
    <property type="entry name" value="SUPEROXIDE DISMUTASE"/>
    <property type="match status" value="1"/>
</dbReference>
<dbReference type="PANTHER" id="PTHR42769:SF3">
    <property type="entry name" value="SUPEROXIDE DISMUTASE [FE] 2, CHLOROPLASTIC"/>
    <property type="match status" value="1"/>
</dbReference>
<dbReference type="Pfam" id="PF02777">
    <property type="entry name" value="Sod_Fe_C"/>
    <property type="match status" value="1"/>
</dbReference>
<dbReference type="Pfam" id="PF00081">
    <property type="entry name" value="Sod_Fe_N"/>
    <property type="match status" value="1"/>
</dbReference>
<dbReference type="PIRSF" id="PIRSF000349">
    <property type="entry name" value="SODismutase"/>
    <property type="match status" value="1"/>
</dbReference>
<dbReference type="PRINTS" id="PR01703">
    <property type="entry name" value="MNSODISMTASE"/>
</dbReference>
<dbReference type="SUPFAM" id="SSF54719">
    <property type="entry name" value="Fe,Mn superoxide dismutase (SOD), C-terminal domain"/>
    <property type="match status" value="1"/>
</dbReference>
<dbReference type="SUPFAM" id="SSF46609">
    <property type="entry name" value="Fe,Mn superoxide dismutase (SOD), N-terminal domain"/>
    <property type="match status" value="1"/>
</dbReference>
<dbReference type="PROSITE" id="PS00088">
    <property type="entry name" value="SOD_MN"/>
    <property type="match status" value="1"/>
</dbReference>
<accession>P77968</accession>
<protein>
    <recommendedName>
        <fullName>Superoxide dismutase [Fe]</fullName>
        <ecNumber>1.15.1.1</ecNumber>
    </recommendedName>
</protein>
<proteinExistence type="evidence at protein level"/>
<feature type="initiator methionine" description="Removed" evidence="2">
    <location>
        <position position="1"/>
    </location>
</feature>
<feature type="chain" id="PRO_0000160003" description="Superoxide dismutase [Fe]">
    <location>
        <begin position="2"/>
        <end position="199"/>
    </location>
</feature>
<feature type="binding site" evidence="1">
    <location>
        <position position="27"/>
    </location>
    <ligand>
        <name>Fe cation</name>
        <dbReference type="ChEBI" id="CHEBI:24875"/>
    </ligand>
</feature>
<feature type="binding site" evidence="1">
    <location>
        <position position="79"/>
    </location>
    <ligand>
        <name>Fe cation</name>
        <dbReference type="ChEBI" id="CHEBI:24875"/>
    </ligand>
</feature>
<feature type="binding site" evidence="1">
    <location>
        <position position="161"/>
    </location>
    <ligand>
        <name>Fe cation</name>
        <dbReference type="ChEBI" id="CHEBI:24875"/>
    </ligand>
</feature>
<feature type="binding site" evidence="1">
    <location>
        <position position="165"/>
    </location>
    <ligand>
        <name>Fe cation</name>
        <dbReference type="ChEBI" id="CHEBI:24875"/>
    </ligand>
</feature>
<gene>
    <name type="primary">sodB</name>
    <name type="ordered locus">slr1516</name>
</gene>
<keyword id="KW-0903">Direct protein sequencing</keyword>
<keyword id="KW-0408">Iron</keyword>
<keyword id="KW-0479">Metal-binding</keyword>
<keyword id="KW-0560">Oxidoreductase</keyword>
<keyword id="KW-1185">Reference proteome</keyword>
<evidence type="ECO:0000250" key="1"/>
<evidence type="ECO:0000269" key="2">
    <source>
    </source>
</evidence>
<evidence type="ECO:0000305" key="3"/>
<sequence>MAYALPNLPYDYTALEPCISKSTLEFHHDKHHAAYVNNFNNAVAGTDLDNQSIEDVIKAVAGDASKAGIFNNAAQAWNHSFYWNCMKPGGGGQPSGALADKINADFGSFDAFVEAFKQAGATQFGSGWAWLVLDNGTLKVTKTGNAENPMTAGQTPLLTMDVWEHAYYLDYQNRRPDYIADFLGKLVNWDFVAANLAAA</sequence>
<name>SODF_SYNY3</name>
<comment type="function">
    <text>Destroys superoxide anion radicals which are normally produced within the cells and which are toxic to biological systems.</text>
</comment>
<comment type="catalytic activity">
    <reaction>
        <text>2 superoxide + 2 H(+) = H2O2 + O2</text>
        <dbReference type="Rhea" id="RHEA:20696"/>
        <dbReference type="ChEBI" id="CHEBI:15378"/>
        <dbReference type="ChEBI" id="CHEBI:15379"/>
        <dbReference type="ChEBI" id="CHEBI:16240"/>
        <dbReference type="ChEBI" id="CHEBI:18421"/>
        <dbReference type="EC" id="1.15.1.1"/>
    </reaction>
</comment>
<comment type="cofactor">
    <cofactor evidence="1">
        <name>Fe cation</name>
        <dbReference type="ChEBI" id="CHEBI:24875"/>
    </cofactor>
    <text evidence="1">Binds 1 Fe cation per subunit.</text>
</comment>
<comment type="subunit">
    <text evidence="1">Homodimer.</text>
</comment>
<comment type="similarity">
    <text evidence="3">Belongs to the iron/manganese superoxide dismutase family.</text>
</comment>